<comment type="function">
    <text evidence="2 3">Snake venom lectin that activates platelets by binding to the platelet collagen receptor glycoprotein VI (GP6) (PubMed:9153205). The indirect activation of integrin alpha-IIb/beta-3 (ITGA2B/ITGB3) also induced by the toxin is upstream the cytoskeletal translocation of GPIb, FcRgamma (FCER1G) and 14-3-3zeta (YWHAZ) (PubMed:16102113).</text>
</comment>
<comment type="subunit">
    <text>Tetramer of heterodimers of alpha and beta subunits (alphabeta)(4); disulfide-linked.</text>
</comment>
<comment type="subcellular location">
    <subcellularLocation>
        <location>Secreted</location>
    </subcellularLocation>
</comment>
<comment type="tissue specificity">
    <text>Expressed by the venom gland.</text>
</comment>
<comment type="miscellaneous">
    <text evidence="6">Negative results: does not act by binding to GPIb.</text>
</comment>
<comment type="similarity">
    <text evidence="5">Belongs to the snaclec family.</text>
</comment>
<name>SLA_CRODU</name>
<proteinExistence type="evidence at protein level"/>
<keyword id="KW-0002">3D-structure</keyword>
<keyword id="KW-0903">Direct protein sequencing</keyword>
<keyword id="KW-1015">Disulfide bond</keyword>
<keyword id="KW-1199">Hemostasis impairing toxin</keyword>
<keyword id="KW-1202">Platelet aggregation activating toxin</keyword>
<keyword id="KW-0964">Secreted</keyword>
<keyword id="KW-0732">Signal</keyword>
<keyword id="KW-0800">Toxin</keyword>
<dbReference type="EMBL" id="Y16348">
    <property type="protein sequence ID" value="CAA76181.1"/>
    <property type="molecule type" value="mRNA"/>
</dbReference>
<dbReference type="EMBL" id="AF541882">
    <property type="protein sequence ID" value="AAQ11363.1"/>
    <property type="molecule type" value="mRNA"/>
</dbReference>
<dbReference type="PDB" id="1UMR">
    <property type="method" value="X-ray"/>
    <property type="resolution" value="2.40 A"/>
    <property type="chains" value="A/B=24-158"/>
</dbReference>
<dbReference type="PDB" id="1UOS">
    <property type="method" value="X-ray"/>
    <property type="resolution" value="2.70 A"/>
    <property type="chains" value="A/C=24-158"/>
</dbReference>
<dbReference type="PDBsum" id="1UMR"/>
<dbReference type="PDBsum" id="1UOS"/>
<dbReference type="SMR" id="O93426"/>
<dbReference type="ComplexPortal" id="CPX-2810">
    <property type="entry name" value="Convulxin venom toxin complex"/>
</dbReference>
<dbReference type="EvolutionaryTrace" id="O93426"/>
<dbReference type="GO" id="GO:0005576">
    <property type="term" value="C:extracellular region"/>
    <property type="evidence" value="ECO:0007669"/>
    <property type="project" value="UniProtKB-SubCell"/>
</dbReference>
<dbReference type="GO" id="GO:0090729">
    <property type="term" value="F:toxin activity"/>
    <property type="evidence" value="ECO:0007669"/>
    <property type="project" value="UniProtKB-KW"/>
</dbReference>
<dbReference type="FunFam" id="3.10.100.10:FF:000087">
    <property type="entry name" value="Snaclec rhodocetin subunit delta"/>
    <property type="match status" value="1"/>
</dbReference>
<dbReference type="Gene3D" id="3.10.100.10">
    <property type="entry name" value="Mannose-Binding Protein A, subunit A"/>
    <property type="match status" value="1"/>
</dbReference>
<dbReference type="InterPro" id="IPR001304">
    <property type="entry name" value="C-type_lectin-like"/>
</dbReference>
<dbReference type="InterPro" id="IPR016186">
    <property type="entry name" value="C-type_lectin-like/link_sf"/>
</dbReference>
<dbReference type="InterPro" id="IPR050111">
    <property type="entry name" value="C-type_lectin/snaclec_domain"/>
</dbReference>
<dbReference type="InterPro" id="IPR016187">
    <property type="entry name" value="CTDL_fold"/>
</dbReference>
<dbReference type="PANTHER" id="PTHR22803">
    <property type="entry name" value="MANNOSE, PHOSPHOLIPASE, LECTIN RECEPTOR RELATED"/>
    <property type="match status" value="1"/>
</dbReference>
<dbReference type="Pfam" id="PF00059">
    <property type="entry name" value="Lectin_C"/>
    <property type="match status" value="1"/>
</dbReference>
<dbReference type="PRINTS" id="PR01504">
    <property type="entry name" value="PNCREATITSAP"/>
</dbReference>
<dbReference type="SMART" id="SM00034">
    <property type="entry name" value="CLECT"/>
    <property type="match status" value="1"/>
</dbReference>
<dbReference type="SUPFAM" id="SSF56436">
    <property type="entry name" value="C-type lectin-like"/>
    <property type="match status" value="1"/>
</dbReference>
<dbReference type="PROSITE" id="PS50041">
    <property type="entry name" value="C_TYPE_LECTIN_2"/>
    <property type="match status" value="1"/>
</dbReference>
<sequence>MGRFIFVSFGLLVLFLSLSGTGAGLHCPSDWYYYDQHCYRIFNEEMNWEDAEWFCTKQAKGAHLVSIKSAKEADFVAWMVTQNIEESFSHVSIGLRVQNKEKQCSTKWSDGSSVSYDNLLDLYITKCSLLKKETGFRKWFVASCIGKIPFVCKFPPQC</sequence>
<accession>O93426</accession>
<reference key="1">
    <citation type="journal article" date="1998" name="Biochem. J.">
        <title>Cloning of subunits of convulxin, a collagen-like platelet-aggregating protein from Crotalus durissus terrificus venom.</title>
        <authorList>
            <person name="Leduc M."/>
            <person name="Bon C."/>
        </authorList>
    </citation>
    <scope>NUCLEOTIDE SEQUENCE [MRNA]</scope>
    <scope>PROTEIN SEQUENCE OF 24-48; 61-68; 108-120; 139-145 AND 149-153</scope>
    <source>
        <tissue>Venom</tissue>
        <tissue>Venom gland</tissue>
    </source>
</reference>
<reference key="2">
    <citation type="submission" date="2002-08" db="EMBL/GenBank/DDBJ databases">
        <authorList>
            <person name="Radis-Baptista G."/>
            <person name="Camargo A.C.M."/>
            <person name="Yamane T."/>
        </authorList>
    </citation>
    <scope>NUCLEOTIDE SEQUENCE [MRNA]</scope>
    <source>
        <tissue>Venom gland</tissue>
    </source>
</reference>
<reference key="3">
    <citation type="journal article" date="1997" name="J. Biol. Chem.">
        <title>Platelet activation and signal transduction by convulxin, a C-type lectin from Crotalus durissus terrificus (tropical rattlesnake) venom via the p62/GPVI collagen receptor.</title>
        <authorList>
            <person name="Polgar J."/>
            <person name="Clemetson J.M."/>
            <person name="Kehrel B.E."/>
            <person name="Wiedemann M."/>
            <person name="Magnenat E.M."/>
            <person name="Wells T.N."/>
            <person name="Clemetson K.J."/>
        </authorList>
    </citation>
    <scope>PROTEIN SEQUENCE OF 24-43</scope>
    <scope>FUNCTION</scope>
    <source>
        <tissue>Venom</tissue>
    </source>
</reference>
<reference key="4">
    <citation type="journal article" date="2005" name="J. Thromb. Haemost.">
        <title>Translocation of GPIb and Fc receptor gamma-chain to cytoskeleton in mucetin-activated platelets.</title>
        <authorList>
            <person name="Lu Q."/>
            <person name="Clemetson J.M."/>
            <person name="Clemetson K.J."/>
        </authorList>
    </citation>
    <scope>FUNCTION</scope>
</reference>
<reference key="5">
    <citation type="journal article" date="2003" name="Biochem. Biophys. Res. Commun.">
        <title>Crystal structure of the platelet activator convulxin, a disulfide-linked alpha4beta4 cyclic tetramer from the venom of Crotalus durissus terrificus.</title>
        <authorList>
            <person name="Murakami M.T."/>
            <person name="Zela S.P."/>
            <person name="Gava L.M."/>
            <person name="Michelan-Duarte S."/>
            <person name="Cintra A.C.O."/>
            <person name="Arni R.K."/>
        </authorList>
    </citation>
    <scope>X-RAY CRYSTALLOGRAPHY (2.4 ANGSTROMS) OF 24-158</scope>
</reference>
<reference key="6">
    <citation type="journal article" date="2004" name="Acta Crystallogr. D">
        <title>Structure of the snake-venom toxin convulxin.</title>
        <authorList>
            <person name="Batuwangala T."/>
            <person name="Leduc M."/>
            <person name="Gibbins J.M."/>
            <person name="Bon C."/>
            <person name="Jones E.Y."/>
        </authorList>
    </citation>
    <scope>X-RAY CRYSTALLOGRAPHY (2.7 ANGSTROMS) OF 26-158</scope>
</reference>
<organism>
    <name type="scientific">Crotalus durissus terrificus</name>
    <name type="common">South American rattlesnake</name>
    <dbReference type="NCBI Taxonomy" id="8732"/>
    <lineage>
        <taxon>Eukaryota</taxon>
        <taxon>Metazoa</taxon>
        <taxon>Chordata</taxon>
        <taxon>Craniata</taxon>
        <taxon>Vertebrata</taxon>
        <taxon>Euteleostomi</taxon>
        <taxon>Lepidosauria</taxon>
        <taxon>Squamata</taxon>
        <taxon>Bifurcata</taxon>
        <taxon>Unidentata</taxon>
        <taxon>Episquamata</taxon>
        <taxon>Toxicofera</taxon>
        <taxon>Serpentes</taxon>
        <taxon>Colubroidea</taxon>
        <taxon>Viperidae</taxon>
        <taxon>Crotalinae</taxon>
        <taxon>Crotalus</taxon>
    </lineage>
</organism>
<evidence type="ECO:0000255" key="1">
    <source>
        <dbReference type="PROSITE-ProRule" id="PRU00040"/>
    </source>
</evidence>
<evidence type="ECO:0000269" key="2">
    <source>
    </source>
</evidence>
<evidence type="ECO:0000269" key="3">
    <source>
    </source>
</evidence>
<evidence type="ECO:0000269" key="4">
    <source>
    </source>
</evidence>
<evidence type="ECO:0000305" key="5"/>
<evidence type="ECO:0000305" key="6">
    <source>
    </source>
</evidence>
<evidence type="ECO:0007829" key="7">
    <source>
        <dbReference type="PDB" id="1UMR"/>
    </source>
</evidence>
<protein>
    <recommendedName>
        <fullName>Snaclec convulxin subunit alpha</fullName>
        <shortName>CVX-alpha</shortName>
    </recommendedName>
</protein>
<feature type="signal peptide" evidence="3 4">
    <location>
        <begin position="1"/>
        <end position="23"/>
    </location>
</feature>
<feature type="chain" id="PRO_0000017528" description="Snaclec convulxin subunit alpha">
    <location>
        <begin position="24"/>
        <end position="158"/>
    </location>
</feature>
<feature type="domain" description="C-type lectin" evidence="1">
    <location>
        <begin position="34"/>
        <end position="158"/>
    </location>
</feature>
<feature type="disulfide bond">
    <location>
        <begin position="27"/>
        <end position="38"/>
    </location>
</feature>
<feature type="disulfide bond">
    <location>
        <begin position="55"/>
        <end position="152"/>
    </location>
</feature>
<feature type="disulfide bond" description="Interchain (with C-100 in subunit beta)">
    <location>
        <position position="104"/>
    </location>
</feature>
<feature type="disulfide bond">
    <location>
        <begin position="127"/>
        <end position="144"/>
    </location>
</feature>
<feature type="disulfide bond" description="Interchain (with C-26 in subunit beta)">
    <location>
        <position position="158"/>
    </location>
</feature>
<feature type="strand" evidence="7">
    <location>
        <begin position="32"/>
        <end position="34"/>
    </location>
</feature>
<feature type="strand" evidence="7">
    <location>
        <begin position="37"/>
        <end position="46"/>
    </location>
</feature>
<feature type="helix" evidence="7">
    <location>
        <begin position="48"/>
        <end position="58"/>
    </location>
</feature>
<feature type="helix" evidence="7">
    <location>
        <begin position="70"/>
        <end position="83"/>
    </location>
</feature>
<feature type="strand" evidence="7">
    <location>
        <begin position="90"/>
        <end position="92"/>
    </location>
</feature>
<feature type="strand" evidence="7">
    <location>
        <begin position="94"/>
        <end position="97"/>
    </location>
</feature>
<feature type="strand" evidence="7">
    <location>
        <begin position="100"/>
        <end position="104"/>
    </location>
</feature>
<feature type="helix" evidence="7">
    <location>
        <begin position="121"/>
        <end position="123"/>
    </location>
</feature>
<feature type="strand" evidence="7">
    <location>
        <begin position="127"/>
        <end position="131"/>
    </location>
</feature>
<feature type="helix" evidence="7">
    <location>
        <begin position="132"/>
        <end position="134"/>
    </location>
</feature>
<feature type="strand" evidence="7">
    <location>
        <begin position="138"/>
        <end position="142"/>
    </location>
</feature>
<feature type="strand" evidence="7">
    <location>
        <begin position="148"/>
        <end position="154"/>
    </location>
</feature>